<evidence type="ECO:0000255" key="1">
    <source>
        <dbReference type="HAMAP-Rule" id="MF_00169"/>
    </source>
</evidence>
<name>AROQ_STRM5</name>
<keyword id="KW-0028">Amino-acid biosynthesis</keyword>
<keyword id="KW-0057">Aromatic amino acid biosynthesis</keyword>
<keyword id="KW-0456">Lyase</keyword>
<feature type="chain" id="PRO_1000097625" description="3-dehydroquinate dehydratase">
    <location>
        <begin position="1"/>
        <end position="149"/>
    </location>
</feature>
<feature type="active site" description="Proton acceptor" evidence="1">
    <location>
        <position position="23"/>
    </location>
</feature>
<feature type="active site" description="Proton donor" evidence="1">
    <location>
        <position position="101"/>
    </location>
</feature>
<feature type="binding site" evidence="1">
    <location>
        <position position="75"/>
    </location>
    <ligand>
        <name>substrate</name>
    </ligand>
</feature>
<feature type="binding site" evidence="1">
    <location>
        <position position="81"/>
    </location>
    <ligand>
        <name>substrate</name>
    </ligand>
</feature>
<feature type="binding site" evidence="1">
    <location>
        <position position="88"/>
    </location>
    <ligand>
        <name>substrate</name>
    </ligand>
</feature>
<feature type="binding site" evidence="1">
    <location>
        <begin position="102"/>
        <end position="103"/>
    </location>
    <ligand>
        <name>substrate</name>
    </ligand>
</feature>
<feature type="binding site" evidence="1">
    <location>
        <position position="112"/>
    </location>
    <ligand>
        <name>substrate</name>
    </ligand>
</feature>
<feature type="site" description="Transition state stabilizer" evidence="1">
    <location>
        <position position="18"/>
    </location>
</feature>
<sequence>MAKLLVLHGPNLNLLGTREPEVYGHTTLADIDQALAAQASTAGHAVESLQSNAEHVLVDRVQAARNDGTAFILINPAAFTHTSVALRDALAAVAVPFIEIHLSNPHTREPFRQHSYFSDKAVGVVCGFGADSYRYAMDAALARVRVAGA</sequence>
<gene>
    <name evidence="1" type="primary">aroQ</name>
    <name type="ordered locus">Smal_3646</name>
</gene>
<protein>
    <recommendedName>
        <fullName evidence="1">3-dehydroquinate dehydratase</fullName>
        <shortName evidence="1">3-dehydroquinase</shortName>
        <ecNumber evidence="1">4.2.1.10</ecNumber>
    </recommendedName>
    <alternativeName>
        <fullName evidence="1">Type II DHQase</fullName>
    </alternativeName>
</protein>
<proteinExistence type="inferred from homology"/>
<comment type="function">
    <text evidence="1">Catalyzes a trans-dehydration via an enolate intermediate.</text>
</comment>
<comment type="catalytic activity">
    <reaction evidence="1">
        <text>3-dehydroquinate = 3-dehydroshikimate + H2O</text>
        <dbReference type="Rhea" id="RHEA:21096"/>
        <dbReference type="ChEBI" id="CHEBI:15377"/>
        <dbReference type="ChEBI" id="CHEBI:16630"/>
        <dbReference type="ChEBI" id="CHEBI:32364"/>
        <dbReference type="EC" id="4.2.1.10"/>
    </reaction>
</comment>
<comment type="pathway">
    <text evidence="1">Metabolic intermediate biosynthesis; chorismate biosynthesis; chorismate from D-erythrose 4-phosphate and phosphoenolpyruvate: step 3/7.</text>
</comment>
<comment type="subunit">
    <text evidence="1">Homododecamer.</text>
</comment>
<comment type="similarity">
    <text evidence="1">Belongs to the type-II 3-dehydroquinase family.</text>
</comment>
<reference key="1">
    <citation type="submission" date="2008-06" db="EMBL/GenBank/DDBJ databases">
        <title>Complete sequence of Stenotrophomonas maltophilia R551-3.</title>
        <authorList>
            <consortium name="US DOE Joint Genome Institute"/>
            <person name="Lucas S."/>
            <person name="Copeland A."/>
            <person name="Lapidus A."/>
            <person name="Glavina del Rio T."/>
            <person name="Dalin E."/>
            <person name="Tice H."/>
            <person name="Pitluck S."/>
            <person name="Chain P."/>
            <person name="Malfatti S."/>
            <person name="Shin M."/>
            <person name="Vergez L."/>
            <person name="Lang D."/>
            <person name="Schmutz J."/>
            <person name="Larimer F."/>
            <person name="Land M."/>
            <person name="Hauser L."/>
            <person name="Kyrpides N."/>
            <person name="Mikhailova N."/>
            <person name="Taghavi S."/>
            <person name="Monchy S."/>
            <person name="Newman L."/>
            <person name="Vangronsveld J."/>
            <person name="van der Lelie D."/>
            <person name="Richardson P."/>
        </authorList>
    </citation>
    <scope>NUCLEOTIDE SEQUENCE [LARGE SCALE GENOMIC DNA]</scope>
    <source>
        <strain>R551-3</strain>
    </source>
</reference>
<organism>
    <name type="scientific">Stenotrophomonas maltophilia (strain R551-3)</name>
    <dbReference type="NCBI Taxonomy" id="391008"/>
    <lineage>
        <taxon>Bacteria</taxon>
        <taxon>Pseudomonadati</taxon>
        <taxon>Pseudomonadota</taxon>
        <taxon>Gammaproteobacteria</taxon>
        <taxon>Lysobacterales</taxon>
        <taxon>Lysobacteraceae</taxon>
        <taxon>Stenotrophomonas</taxon>
        <taxon>Stenotrophomonas maltophilia group</taxon>
    </lineage>
</organism>
<accession>B4SKN8</accession>
<dbReference type="EC" id="4.2.1.10" evidence="1"/>
<dbReference type="EMBL" id="CP001111">
    <property type="protein sequence ID" value="ACF53345.1"/>
    <property type="molecule type" value="Genomic_DNA"/>
</dbReference>
<dbReference type="RefSeq" id="WP_012512268.1">
    <property type="nucleotide sequence ID" value="NC_011071.1"/>
</dbReference>
<dbReference type="SMR" id="B4SKN8"/>
<dbReference type="STRING" id="391008.Smal_3646"/>
<dbReference type="KEGG" id="smt:Smal_3646"/>
<dbReference type="eggNOG" id="COG0757">
    <property type="taxonomic scope" value="Bacteria"/>
</dbReference>
<dbReference type="HOGENOM" id="CLU_090968_1_0_6"/>
<dbReference type="OrthoDB" id="9790793at2"/>
<dbReference type="UniPathway" id="UPA00053">
    <property type="reaction ID" value="UER00086"/>
</dbReference>
<dbReference type="Proteomes" id="UP000001867">
    <property type="component" value="Chromosome"/>
</dbReference>
<dbReference type="GO" id="GO:0003855">
    <property type="term" value="F:3-dehydroquinate dehydratase activity"/>
    <property type="evidence" value="ECO:0007669"/>
    <property type="project" value="UniProtKB-UniRule"/>
</dbReference>
<dbReference type="GO" id="GO:0008652">
    <property type="term" value="P:amino acid biosynthetic process"/>
    <property type="evidence" value="ECO:0007669"/>
    <property type="project" value="UniProtKB-KW"/>
</dbReference>
<dbReference type="GO" id="GO:0009073">
    <property type="term" value="P:aromatic amino acid family biosynthetic process"/>
    <property type="evidence" value="ECO:0007669"/>
    <property type="project" value="UniProtKB-KW"/>
</dbReference>
<dbReference type="GO" id="GO:0009423">
    <property type="term" value="P:chorismate biosynthetic process"/>
    <property type="evidence" value="ECO:0007669"/>
    <property type="project" value="UniProtKB-UniRule"/>
</dbReference>
<dbReference type="GO" id="GO:0019631">
    <property type="term" value="P:quinate catabolic process"/>
    <property type="evidence" value="ECO:0007669"/>
    <property type="project" value="TreeGrafter"/>
</dbReference>
<dbReference type="CDD" id="cd00466">
    <property type="entry name" value="DHQase_II"/>
    <property type="match status" value="1"/>
</dbReference>
<dbReference type="Gene3D" id="3.40.50.9100">
    <property type="entry name" value="Dehydroquinase, class II"/>
    <property type="match status" value="1"/>
</dbReference>
<dbReference type="HAMAP" id="MF_00169">
    <property type="entry name" value="AroQ"/>
    <property type="match status" value="1"/>
</dbReference>
<dbReference type="InterPro" id="IPR001874">
    <property type="entry name" value="DHquinase_II"/>
</dbReference>
<dbReference type="InterPro" id="IPR018509">
    <property type="entry name" value="DHquinase_II_CS"/>
</dbReference>
<dbReference type="InterPro" id="IPR036441">
    <property type="entry name" value="DHquinase_II_sf"/>
</dbReference>
<dbReference type="NCBIfam" id="TIGR01088">
    <property type="entry name" value="aroQ"/>
    <property type="match status" value="1"/>
</dbReference>
<dbReference type="NCBIfam" id="NF003804">
    <property type="entry name" value="PRK05395.1-1"/>
    <property type="match status" value="1"/>
</dbReference>
<dbReference type="NCBIfam" id="NF003805">
    <property type="entry name" value="PRK05395.1-2"/>
    <property type="match status" value="1"/>
</dbReference>
<dbReference type="NCBIfam" id="NF003806">
    <property type="entry name" value="PRK05395.1-3"/>
    <property type="match status" value="1"/>
</dbReference>
<dbReference type="NCBIfam" id="NF003807">
    <property type="entry name" value="PRK05395.1-4"/>
    <property type="match status" value="1"/>
</dbReference>
<dbReference type="PANTHER" id="PTHR21272">
    <property type="entry name" value="CATABOLIC 3-DEHYDROQUINASE"/>
    <property type="match status" value="1"/>
</dbReference>
<dbReference type="PANTHER" id="PTHR21272:SF3">
    <property type="entry name" value="CATABOLIC 3-DEHYDROQUINASE"/>
    <property type="match status" value="1"/>
</dbReference>
<dbReference type="Pfam" id="PF01220">
    <property type="entry name" value="DHquinase_II"/>
    <property type="match status" value="1"/>
</dbReference>
<dbReference type="PIRSF" id="PIRSF001399">
    <property type="entry name" value="DHquinase_II"/>
    <property type="match status" value="1"/>
</dbReference>
<dbReference type="SUPFAM" id="SSF52304">
    <property type="entry name" value="Type II 3-dehydroquinate dehydratase"/>
    <property type="match status" value="1"/>
</dbReference>
<dbReference type="PROSITE" id="PS01029">
    <property type="entry name" value="DEHYDROQUINASE_II"/>
    <property type="match status" value="1"/>
</dbReference>